<proteinExistence type="inferred from homology"/>
<name>ARL6_CAEBR</name>
<sequence>MGFLSSLSNLFGMGKKDVNIVVVGLDNSGKTTILNQLKTPETRSQQIVPTVGHVVTNFSTQNLSFHAFDMAGQMKYRSTWESYFHSSQGVIFVLDSSDRVRMELLKDELWLVLDHKDVASRGIPVVILANKMDIPGAMTCADITAALGLNLHRSGTWSIHSTCALTGDGLDKAMQQLSSEIQKYLETRKS</sequence>
<comment type="subcellular location">
    <subcellularLocation>
        <location evidence="2">Cytoplasm</location>
    </subcellularLocation>
</comment>
<comment type="similarity">
    <text evidence="4">Belongs to the small GTPase superfamily. Arf family.</text>
</comment>
<keyword id="KW-0963">Cytoplasm</keyword>
<keyword id="KW-0342">GTP-binding</keyword>
<keyword id="KW-0449">Lipoprotein</keyword>
<keyword id="KW-0460">Magnesium</keyword>
<keyword id="KW-0479">Metal-binding</keyword>
<keyword id="KW-0519">Myristate</keyword>
<keyword id="KW-0547">Nucleotide-binding</keyword>
<keyword id="KW-1185">Reference proteome</keyword>
<accession>Q60Z38</accession>
<accession>A8XSQ6</accession>
<feature type="initiator methionine" description="Removed" evidence="4">
    <location>
        <position position="1"/>
    </location>
</feature>
<feature type="chain" id="PRO_0000262958" description="ADP-ribosylation factor-like protein 6">
    <location>
        <begin position="2"/>
        <end position="190"/>
    </location>
</feature>
<feature type="binding site" evidence="1">
    <location>
        <begin position="24"/>
        <end position="31"/>
    </location>
    <ligand>
        <name>GTP</name>
        <dbReference type="ChEBI" id="CHEBI:37565"/>
    </ligand>
</feature>
<feature type="binding site" evidence="1">
    <location>
        <position position="31"/>
    </location>
    <ligand>
        <name>Mg(2+)</name>
        <dbReference type="ChEBI" id="CHEBI:18420"/>
    </ligand>
</feature>
<feature type="binding site" evidence="3">
    <location>
        <position position="50"/>
    </location>
    <ligand>
        <name>GTP</name>
        <dbReference type="ChEBI" id="CHEBI:37565"/>
    </ligand>
</feature>
<feature type="binding site" evidence="1">
    <location>
        <position position="50"/>
    </location>
    <ligand>
        <name>Mg(2+)</name>
        <dbReference type="ChEBI" id="CHEBI:18420"/>
    </ligand>
</feature>
<feature type="binding site" evidence="1">
    <location>
        <begin position="69"/>
        <end position="73"/>
    </location>
    <ligand>
        <name>GTP</name>
        <dbReference type="ChEBI" id="CHEBI:37565"/>
    </ligand>
</feature>
<feature type="binding site" evidence="1">
    <location>
        <position position="72"/>
    </location>
    <ligand>
        <name>GTP</name>
        <dbReference type="ChEBI" id="CHEBI:37565"/>
    </ligand>
</feature>
<feature type="binding site" evidence="3">
    <location>
        <begin position="130"/>
        <end position="133"/>
    </location>
    <ligand>
        <name>GTP</name>
        <dbReference type="ChEBI" id="CHEBI:37565"/>
    </ligand>
</feature>
<feature type="binding site" evidence="1">
    <location>
        <position position="164"/>
    </location>
    <ligand>
        <name>GTP</name>
        <dbReference type="ChEBI" id="CHEBI:37565"/>
    </ligand>
</feature>
<feature type="lipid moiety-binding region" description="N-myristoyl glycine" evidence="4">
    <location>
        <position position="2"/>
    </location>
</feature>
<organism>
    <name type="scientific">Caenorhabditis briggsae</name>
    <dbReference type="NCBI Taxonomy" id="6238"/>
    <lineage>
        <taxon>Eukaryota</taxon>
        <taxon>Metazoa</taxon>
        <taxon>Ecdysozoa</taxon>
        <taxon>Nematoda</taxon>
        <taxon>Chromadorea</taxon>
        <taxon>Rhabditida</taxon>
        <taxon>Rhabditina</taxon>
        <taxon>Rhabditomorpha</taxon>
        <taxon>Rhabditoidea</taxon>
        <taxon>Rhabditidae</taxon>
        <taxon>Peloderinae</taxon>
        <taxon>Caenorhabditis</taxon>
    </lineage>
</organism>
<dbReference type="EMBL" id="HE600963">
    <property type="protein sequence ID" value="CAP35508.1"/>
    <property type="molecule type" value="Genomic_DNA"/>
</dbReference>
<dbReference type="SMR" id="Q60Z38"/>
<dbReference type="FunCoup" id="Q60Z38">
    <property type="interactions" value="545"/>
</dbReference>
<dbReference type="STRING" id="6238.Q60Z38"/>
<dbReference type="EnsemblMetazoa" id="CBG17978.1">
    <property type="protein sequence ID" value="CBG17978.1"/>
    <property type="gene ID" value="WBGene00037478"/>
</dbReference>
<dbReference type="KEGG" id="cbr:CBG_17978"/>
<dbReference type="CTD" id="8584035"/>
<dbReference type="WormBase" id="CBG17978">
    <property type="protein sequence ID" value="CBP04315"/>
    <property type="gene ID" value="WBGene00037478"/>
    <property type="gene designation" value="Cbr-arl-6"/>
</dbReference>
<dbReference type="eggNOG" id="KOG0070">
    <property type="taxonomic scope" value="Eukaryota"/>
</dbReference>
<dbReference type="HOGENOM" id="CLU_040729_9_1_1"/>
<dbReference type="InParanoid" id="Q60Z38"/>
<dbReference type="OMA" id="IHSTCAL"/>
<dbReference type="OrthoDB" id="442317at2759"/>
<dbReference type="Proteomes" id="UP000008549">
    <property type="component" value="Unassembled WGS sequence"/>
</dbReference>
<dbReference type="GO" id="GO:0005930">
    <property type="term" value="C:axoneme"/>
    <property type="evidence" value="ECO:0000318"/>
    <property type="project" value="GO_Central"/>
</dbReference>
<dbReference type="GO" id="GO:0005737">
    <property type="term" value="C:cytoplasm"/>
    <property type="evidence" value="ECO:0000318"/>
    <property type="project" value="GO_Central"/>
</dbReference>
<dbReference type="GO" id="GO:0005829">
    <property type="term" value="C:cytosol"/>
    <property type="evidence" value="ECO:0007669"/>
    <property type="project" value="EnsemblMetazoa"/>
</dbReference>
<dbReference type="GO" id="GO:0030425">
    <property type="term" value="C:dendrite"/>
    <property type="evidence" value="ECO:0007669"/>
    <property type="project" value="EnsemblMetazoa"/>
</dbReference>
<dbReference type="GO" id="GO:0005525">
    <property type="term" value="F:GTP binding"/>
    <property type="evidence" value="ECO:0000318"/>
    <property type="project" value="GO_Central"/>
</dbReference>
<dbReference type="GO" id="GO:0003924">
    <property type="term" value="F:GTPase activity"/>
    <property type="evidence" value="ECO:0007669"/>
    <property type="project" value="EnsemblMetazoa"/>
</dbReference>
<dbReference type="GO" id="GO:0046872">
    <property type="term" value="F:metal ion binding"/>
    <property type="evidence" value="ECO:0007669"/>
    <property type="project" value="UniProtKB-KW"/>
</dbReference>
<dbReference type="GO" id="GO:0060271">
    <property type="term" value="P:cilium assembly"/>
    <property type="evidence" value="ECO:0000318"/>
    <property type="project" value="GO_Central"/>
</dbReference>
<dbReference type="GO" id="GO:0006886">
    <property type="term" value="P:intracellular protein transport"/>
    <property type="evidence" value="ECO:0000318"/>
    <property type="project" value="GO_Central"/>
</dbReference>
<dbReference type="GO" id="GO:0061512">
    <property type="term" value="P:protein localization to cilium"/>
    <property type="evidence" value="ECO:0000318"/>
    <property type="project" value="GO_Central"/>
</dbReference>
<dbReference type="GO" id="GO:0016192">
    <property type="term" value="P:vesicle-mediated transport"/>
    <property type="evidence" value="ECO:0000318"/>
    <property type="project" value="GO_Central"/>
</dbReference>
<dbReference type="CDD" id="cd04157">
    <property type="entry name" value="Arl6"/>
    <property type="match status" value="1"/>
</dbReference>
<dbReference type="FunFam" id="3.40.50.300:FF:001166">
    <property type="entry name" value="ADP-ribosylation factor D"/>
    <property type="match status" value="1"/>
</dbReference>
<dbReference type="Gene3D" id="3.40.50.300">
    <property type="entry name" value="P-loop containing nucleotide triphosphate hydrolases"/>
    <property type="match status" value="1"/>
</dbReference>
<dbReference type="InterPro" id="IPR041839">
    <property type="entry name" value="Arl6"/>
</dbReference>
<dbReference type="InterPro" id="IPR027417">
    <property type="entry name" value="P-loop_NTPase"/>
</dbReference>
<dbReference type="InterPro" id="IPR005225">
    <property type="entry name" value="Small_GTP-bd"/>
</dbReference>
<dbReference type="InterPro" id="IPR024156">
    <property type="entry name" value="Small_GTPase_ARF"/>
</dbReference>
<dbReference type="InterPro" id="IPR006689">
    <property type="entry name" value="Small_GTPase_ARF/SAR"/>
</dbReference>
<dbReference type="NCBIfam" id="TIGR00231">
    <property type="entry name" value="small_GTP"/>
    <property type="match status" value="1"/>
</dbReference>
<dbReference type="PANTHER" id="PTHR11711">
    <property type="entry name" value="ADP RIBOSYLATION FACTOR-RELATED"/>
    <property type="match status" value="1"/>
</dbReference>
<dbReference type="Pfam" id="PF00025">
    <property type="entry name" value="Arf"/>
    <property type="match status" value="1"/>
</dbReference>
<dbReference type="PRINTS" id="PR00449">
    <property type="entry name" value="RASTRNSFRMNG"/>
</dbReference>
<dbReference type="SMART" id="SM00177">
    <property type="entry name" value="ARF"/>
    <property type="match status" value="1"/>
</dbReference>
<dbReference type="SMART" id="SM00175">
    <property type="entry name" value="RAB"/>
    <property type="match status" value="1"/>
</dbReference>
<dbReference type="SMART" id="SM00178">
    <property type="entry name" value="SAR"/>
    <property type="match status" value="1"/>
</dbReference>
<dbReference type="SUPFAM" id="SSF52540">
    <property type="entry name" value="P-loop containing nucleoside triphosphate hydrolases"/>
    <property type="match status" value="1"/>
</dbReference>
<dbReference type="PROSITE" id="PS51417">
    <property type="entry name" value="ARF"/>
    <property type="match status" value="1"/>
</dbReference>
<protein>
    <recommendedName>
        <fullName>ADP-ribosylation factor-like protein 6</fullName>
    </recommendedName>
</protein>
<evidence type="ECO:0000250" key="1"/>
<evidence type="ECO:0000250" key="2">
    <source>
        <dbReference type="UniProtKB" id="Q18510"/>
    </source>
</evidence>
<evidence type="ECO:0000250" key="3">
    <source>
        <dbReference type="UniProtKB" id="Q9D0J4"/>
    </source>
</evidence>
<evidence type="ECO:0000255" key="4"/>
<gene>
    <name evidence="2" type="primary">arl-6</name>
    <name type="ORF">CBG17978</name>
</gene>
<reference key="1">
    <citation type="journal article" date="2003" name="PLoS Biol.">
        <title>The genome sequence of Caenorhabditis briggsae: a platform for comparative genomics.</title>
        <authorList>
            <person name="Stein L.D."/>
            <person name="Bao Z."/>
            <person name="Blasiar D."/>
            <person name="Blumenthal T."/>
            <person name="Brent M.R."/>
            <person name="Chen N."/>
            <person name="Chinwalla A."/>
            <person name="Clarke L."/>
            <person name="Clee C."/>
            <person name="Coghlan A."/>
            <person name="Coulson A."/>
            <person name="D'Eustachio P."/>
            <person name="Fitch D.H.A."/>
            <person name="Fulton L.A."/>
            <person name="Fulton R.E."/>
            <person name="Griffiths-Jones S."/>
            <person name="Harris T.W."/>
            <person name="Hillier L.W."/>
            <person name="Kamath R."/>
            <person name="Kuwabara P.E."/>
            <person name="Mardis E.R."/>
            <person name="Marra M.A."/>
            <person name="Miner T.L."/>
            <person name="Minx P."/>
            <person name="Mullikin J.C."/>
            <person name="Plumb R.W."/>
            <person name="Rogers J."/>
            <person name="Schein J.E."/>
            <person name="Sohrmann M."/>
            <person name="Spieth J."/>
            <person name="Stajich J.E."/>
            <person name="Wei C."/>
            <person name="Willey D."/>
            <person name="Wilson R.K."/>
            <person name="Durbin R.M."/>
            <person name="Waterston R.H."/>
        </authorList>
    </citation>
    <scope>NUCLEOTIDE SEQUENCE [LARGE SCALE GENOMIC DNA]</scope>
    <source>
        <strain>AF16</strain>
    </source>
</reference>